<organism>
    <name type="scientific">Pseudomonas aeruginosa (strain LESB58)</name>
    <dbReference type="NCBI Taxonomy" id="557722"/>
    <lineage>
        <taxon>Bacteria</taxon>
        <taxon>Pseudomonadati</taxon>
        <taxon>Pseudomonadota</taxon>
        <taxon>Gammaproteobacteria</taxon>
        <taxon>Pseudomonadales</taxon>
        <taxon>Pseudomonadaceae</taxon>
        <taxon>Pseudomonas</taxon>
    </lineage>
</organism>
<sequence length="501" mass="57313">MSDQQLDQHELQQEENKLIAQRKEKLAAVREARAIAFPNDFRRDAYFADLQKQYADKTKEELEAAAIPVKVAGRIMLNRGSFIVLQDSSERLQVYVNRKTLPEETLAEIKTWDLGDIIGAEGVLARSGKGDLYVDMTSVRLLTKSLRPLPDKHHGLTDTEQRYRQRYVDLMVNEETRHTFRVRSQVIAHIRRFLSERGFLEVETPMLQTIPGGAAAKPFETHHNALDMAMFLRIAPELYLKRLVVGGFEKVFEINRNFRNEGVSTRHNPEFTMLEFYQAYADYEDNMDLTEELFRELAQAVLGTTDVPYGDKVFHFGEPFVRLSVFDSILKYNPEITAADLNDVEKARAIAKKAGAKVLGHEGLGKLQVMIFEELVEHKLEQPHFITRYPFEVSPLARRNDEDPSVTDRFELFIGGREIANAYSELNDAEDQAERFMLQVKEKDAGDDEAMHYDADFINALEYGMPPTAGEGIGIDRLVMLLTNSPSIRDVILFPHMRPQA</sequence>
<evidence type="ECO:0000255" key="1">
    <source>
        <dbReference type="HAMAP-Rule" id="MF_00252"/>
    </source>
</evidence>
<accession>B7V0Z5</accession>
<name>SYK_PSEA8</name>
<proteinExistence type="inferred from homology"/>
<protein>
    <recommendedName>
        <fullName evidence="1">Lysine--tRNA ligase</fullName>
        <ecNumber evidence="1">6.1.1.6</ecNumber>
    </recommendedName>
    <alternativeName>
        <fullName evidence="1">Lysyl-tRNA synthetase</fullName>
        <shortName evidence="1">LysRS</shortName>
    </alternativeName>
</protein>
<keyword id="KW-0030">Aminoacyl-tRNA synthetase</keyword>
<keyword id="KW-0067">ATP-binding</keyword>
<keyword id="KW-0963">Cytoplasm</keyword>
<keyword id="KW-0436">Ligase</keyword>
<keyword id="KW-0460">Magnesium</keyword>
<keyword id="KW-0479">Metal-binding</keyword>
<keyword id="KW-0547">Nucleotide-binding</keyword>
<keyword id="KW-0648">Protein biosynthesis</keyword>
<comment type="catalytic activity">
    <reaction evidence="1">
        <text>tRNA(Lys) + L-lysine + ATP = L-lysyl-tRNA(Lys) + AMP + diphosphate</text>
        <dbReference type="Rhea" id="RHEA:20792"/>
        <dbReference type="Rhea" id="RHEA-COMP:9696"/>
        <dbReference type="Rhea" id="RHEA-COMP:9697"/>
        <dbReference type="ChEBI" id="CHEBI:30616"/>
        <dbReference type="ChEBI" id="CHEBI:32551"/>
        <dbReference type="ChEBI" id="CHEBI:33019"/>
        <dbReference type="ChEBI" id="CHEBI:78442"/>
        <dbReference type="ChEBI" id="CHEBI:78529"/>
        <dbReference type="ChEBI" id="CHEBI:456215"/>
        <dbReference type="EC" id="6.1.1.6"/>
    </reaction>
</comment>
<comment type="cofactor">
    <cofactor evidence="1">
        <name>Mg(2+)</name>
        <dbReference type="ChEBI" id="CHEBI:18420"/>
    </cofactor>
    <text evidence="1">Binds 3 Mg(2+) ions per subunit.</text>
</comment>
<comment type="subunit">
    <text evidence="1">Homodimer.</text>
</comment>
<comment type="subcellular location">
    <subcellularLocation>
        <location evidence="1">Cytoplasm</location>
    </subcellularLocation>
</comment>
<comment type="similarity">
    <text evidence="1">Belongs to the class-II aminoacyl-tRNA synthetase family.</text>
</comment>
<reference key="1">
    <citation type="journal article" date="2009" name="Genome Res.">
        <title>Newly introduced genomic prophage islands are critical determinants of in vivo competitiveness in the Liverpool epidemic strain of Pseudomonas aeruginosa.</title>
        <authorList>
            <person name="Winstanley C."/>
            <person name="Langille M.G.I."/>
            <person name="Fothergill J.L."/>
            <person name="Kukavica-Ibrulj I."/>
            <person name="Paradis-Bleau C."/>
            <person name="Sanschagrin F."/>
            <person name="Thomson N.R."/>
            <person name="Winsor G.L."/>
            <person name="Quail M.A."/>
            <person name="Lennard N."/>
            <person name="Bignell A."/>
            <person name="Clarke L."/>
            <person name="Seeger K."/>
            <person name="Saunders D."/>
            <person name="Harris D."/>
            <person name="Parkhill J."/>
            <person name="Hancock R.E.W."/>
            <person name="Brinkman F.S.L."/>
            <person name="Levesque R.C."/>
        </authorList>
    </citation>
    <scope>NUCLEOTIDE SEQUENCE [LARGE SCALE GENOMIC DNA]</scope>
    <source>
        <strain>LESB58</strain>
    </source>
</reference>
<gene>
    <name evidence="1" type="primary">lysS</name>
    <name type="ordered locus">PLES_12841</name>
</gene>
<dbReference type="EC" id="6.1.1.6" evidence="1"/>
<dbReference type="EMBL" id="FM209186">
    <property type="protein sequence ID" value="CAW26011.1"/>
    <property type="molecule type" value="Genomic_DNA"/>
</dbReference>
<dbReference type="RefSeq" id="WP_003103728.1">
    <property type="nucleotide sequence ID" value="NC_011770.1"/>
</dbReference>
<dbReference type="SMR" id="B7V0Z5"/>
<dbReference type="KEGG" id="pag:PLES_12841"/>
<dbReference type="HOGENOM" id="CLU_008255_6_0_6"/>
<dbReference type="GO" id="GO:0005829">
    <property type="term" value="C:cytosol"/>
    <property type="evidence" value="ECO:0007669"/>
    <property type="project" value="TreeGrafter"/>
</dbReference>
<dbReference type="GO" id="GO:0005524">
    <property type="term" value="F:ATP binding"/>
    <property type="evidence" value="ECO:0007669"/>
    <property type="project" value="UniProtKB-UniRule"/>
</dbReference>
<dbReference type="GO" id="GO:0004824">
    <property type="term" value="F:lysine-tRNA ligase activity"/>
    <property type="evidence" value="ECO:0007669"/>
    <property type="project" value="UniProtKB-UniRule"/>
</dbReference>
<dbReference type="GO" id="GO:0000287">
    <property type="term" value="F:magnesium ion binding"/>
    <property type="evidence" value="ECO:0007669"/>
    <property type="project" value="UniProtKB-UniRule"/>
</dbReference>
<dbReference type="GO" id="GO:0000049">
    <property type="term" value="F:tRNA binding"/>
    <property type="evidence" value="ECO:0007669"/>
    <property type="project" value="TreeGrafter"/>
</dbReference>
<dbReference type="GO" id="GO:0006430">
    <property type="term" value="P:lysyl-tRNA aminoacylation"/>
    <property type="evidence" value="ECO:0007669"/>
    <property type="project" value="UniProtKB-UniRule"/>
</dbReference>
<dbReference type="CDD" id="cd00775">
    <property type="entry name" value="LysRS_core"/>
    <property type="match status" value="1"/>
</dbReference>
<dbReference type="CDD" id="cd04322">
    <property type="entry name" value="LysRS_N"/>
    <property type="match status" value="1"/>
</dbReference>
<dbReference type="FunFam" id="2.40.50.140:FF:000024">
    <property type="entry name" value="Lysine--tRNA ligase"/>
    <property type="match status" value="1"/>
</dbReference>
<dbReference type="FunFam" id="3.30.930.10:FF:000001">
    <property type="entry name" value="Lysine--tRNA ligase"/>
    <property type="match status" value="1"/>
</dbReference>
<dbReference type="Gene3D" id="3.30.930.10">
    <property type="entry name" value="Bira Bifunctional Protein, Domain 2"/>
    <property type="match status" value="1"/>
</dbReference>
<dbReference type="Gene3D" id="2.40.50.140">
    <property type="entry name" value="Nucleic acid-binding proteins"/>
    <property type="match status" value="1"/>
</dbReference>
<dbReference type="HAMAP" id="MF_00252">
    <property type="entry name" value="Lys_tRNA_synth_class2"/>
    <property type="match status" value="1"/>
</dbReference>
<dbReference type="InterPro" id="IPR004364">
    <property type="entry name" value="Aa-tRNA-synt_II"/>
</dbReference>
<dbReference type="InterPro" id="IPR006195">
    <property type="entry name" value="aa-tRNA-synth_II"/>
</dbReference>
<dbReference type="InterPro" id="IPR045864">
    <property type="entry name" value="aa-tRNA-synth_II/BPL/LPL"/>
</dbReference>
<dbReference type="InterPro" id="IPR002313">
    <property type="entry name" value="Lys-tRNA-ligase_II"/>
</dbReference>
<dbReference type="InterPro" id="IPR044136">
    <property type="entry name" value="Lys-tRNA-ligase_II_N"/>
</dbReference>
<dbReference type="InterPro" id="IPR018149">
    <property type="entry name" value="Lys-tRNA-synth_II_C"/>
</dbReference>
<dbReference type="InterPro" id="IPR012340">
    <property type="entry name" value="NA-bd_OB-fold"/>
</dbReference>
<dbReference type="InterPro" id="IPR004365">
    <property type="entry name" value="NA-bd_OB_tRNA"/>
</dbReference>
<dbReference type="NCBIfam" id="TIGR00499">
    <property type="entry name" value="lysS_bact"/>
    <property type="match status" value="1"/>
</dbReference>
<dbReference type="NCBIfam" id="NF001756">
    <property type="entry name" value="PRK00484.1"/>
    <property type="match status" value="1"/>
</dbReference>
<dbReference type="PANTHER" id="PTHR42918:SF15">
    <property type="entry name" value="LYSINE--TRNA LIGASE, CHLOROPLASTIC_MITOCHONDRIAL"/>
    <property type="match status" value="1"/>
</dbReference>
<dbReference type="PANTHER" id="PTHR42918">
    <property type="entry name" value="LYSYL-TRNA SYNTHETASE"/>
    <property type="match status" value="1"/>
</dbReference>
<dbReference type="Pfam" id="PF00152">
    <property type="entry name" value="tRNA-synt_2"/>
    <property type="match status" value="1"/>
</dbReference>
<dbReference type="Pfam" id="PF01336">
    <property type="entry name" value="tRNA_anti-codon"/>
    <property type="match status" value="1"/>
</dbReference>
<dbReference type="PRINTS" id="PR00982">
    <property type="entry name" value="TRNASYNTHLYS"/>
</dbReference>
<dbReference type="SUPFAM" id="SSF55681">
    <property type="entry name" value="Class II aaRS and biotin synthetases"/>
    <property type="match status" value="1"/>
</dbReference>
<dbReference type="SUPFAM" id="SSF50249">
    <property type="entry name" value="Nucleic acid-binding proteins"/>
    <property type="match status" value="1"/>
</dbReference>
<dbReference type="PROSITE" id="PS50862">
    <property type="entry name" value="AA_TRNA_LIGASE_II"/>
    <property type="match status" value="1"/>
</dbReference>
<feature type="chain" id="PRO_1000199248" description="Lysine--tRNA ligase">
    <location>
        <begin position="1"/>
        <end position="501"/>
    </location>
</feature>
<feature type="binding site" evidence="1">
    <location>
        <position position="411"/>
    </location>
    <ligand>
        <name>Mg(2+)</name>
        <dbReference type="ChEBI" id="CHEBI:18420"/>
        <label>1</label>
    </ligand>
</feature>
<feature type="binding site" evidence="1">
    <location>
        <position position="418"/>
    </location>
    <ligand>
        <name>Mg(2+)</name>
        <dbReference type="ChEBI" id="CHEBI:18420"/>
        <label>1</label>
    </ligand>
</feature>
<feature type="binding site" evidence="1">
    <location>
        <position position="418"/>
    </location>
    <ligand>
        <name>Mg(2+)</name>
        <dbReference type="ChEBI" id="CHEBI:18420"/>
        <label>2</label>
    </ligand>
</feature>